<organism>
    <name type="scientific">Protochlamydia amoebophila (strain UWE25)</name>
    <dbReference type="NCBI Taxonomy" id="264201"/>
    <lineage>
        <taxon>Bacteria</taxon>
        <taxon>Pseudomonadati</taxon>
        <taxon>Chlamydiota</taxon>
        <taxon>Chlamydiia</taxon>
        <taxon>Parachlamydiales</taxon>
        <taxon>Parachlamydiaceae</taxon>
        <taxon>Candidatus Protochlamydia</taxon>
    </lineage>
</organism>
<protein>
    <recommendedName>
        <fullName evidence="1">Probable dual-specificity RNA methyltransferase RlmN 2</fullName>
        <ecNumber evidence="1">2.1.1.192</ecNumber>
    </recommendedName>
    <alternativeName>
        <fullName evidence="1">23S rRNA (adenine(2503)-C(2))-methyltransferase 2</fullName>
    </alternativeName>
    <alternativeName>
        <fullName evidence="1">23S rRNA m2A2503 methyltransferase 2</fullName>
    </alternativeName>
    <alternativeName>
        <fullName evidence="1">Ribosomal RNA large subunit methyltransferase N 2</fullName>
    </alternativeName>
    <alternativeName>
        <fullName evidence="1">tRNA (adenine(37)-C(2))-methyltransferase 2</fullName>
    </alternativeName>
    <alternativeName>
        <fullName evidence="1">tRNA m2A37 methyltransferase 2</fullName>
    </alternativeName>
</protein>
<keyword id="KW-0004">4Fe-4S</keyword>
<keyword id="KW-0963">Cytoplasm</keyword>
<keyword id="KW-1015">Disulfide bond</keyword>
<keyword id="KW-0408">Iron</keyword>
<keyword id="KW-0411">Iron-sulfur</keyword>
<keyword id="KW-0479">Metal-binding</keyword>
<keyword id="KW-0489">Methyltransferase</keyword>
<keyword id="KW-1185">Reference proteome</keyword>
<keyword id="KW-0698">rRNA processing</keyword>
<keyword id="KW-0949">S-adenosyl-L-methionine</keyword>
<keyword id="KW-0808">Transferase</keyword>
<keyword id="KW-0819">tRNA processing</keyword>
<comment type="function">
    <text evidence="1">Specifically methylates position 2 of adenine 2503 in 23S rRNA and position 2 of adenine 37 in tRNAs.</text>
</comment>
<comment type="catalytic activity">
    <reaction evidence="1">
        <text>adenosine(2503) in 23S rRNA + 2 reduced [2Fe-2S]-[ferredoxin] + 2 S-adenosyl-L-methionine = 2-methyladenosine(2503) in 23S rRNA + 5'-deoxyadenosine + L-methionine + 2 oxidized [2Fe-2S]-[ferredoxin] + S-adenosyl-L-homocysteine</text>
        <dbReference type="Rhea" id="RHEA:42916"/>
        <dbReference type="Rhea" id="RHEA-COMP:10000"/>
        <dbReference type="Rhea" id="RHEA-COMP:10001"/>
        <dbReference type="Rhea" id="RHEA-COMP:10152"/>
        <dbReference type="Rhea" id="RHEA-COMP:10282"/>
        <dbReference type="ChEBI" id="CHEBI:17319"/>
        <dbReference type="ChEBI" id="CHEBI:33737"/>
        <dbReference type="ChEBI" id="CHEBI:33738"/>
        <dbReference type="ChEBI" id="CHEBI:57844"/>
        <dbReference type="ChEBI" id="CHEBI:57856"/>
        <dbReference type="ChEBI" id="CHEBI:59789"/>
        <dbReference type="ChEBI" id="CHEBI:74411"/>
        <dbReference type="ChEBI" id="CHEBI:74497"/>
        <dbReference type="EC" id="2.1.1.192"/>
    </reaction>
</comment>
<comment type="catalytic activity">
    <reaction evidence="1">
        <text>adenosine(37) in tRNA + 2 reduced [2Fe-2S]-[ferredoxin] + 2 S-adenosyl-L-methionine = 2-methyladenosine(37) in tRNA + 5'-deoxyadenosine + L-methionine + 2 oxidized [2Fe-2S]-[ferredoxin] + S-adenosyl-L-homocysteine</text>
        <dbReference type="Rhea" id="RHEA:43332"/>
        <dbReference type="Rhea" id="RHEA-COMP:10000"/>
        <dbReference type="Rhea" id="RHEA-COMP:10001"/>
        <dbReference type="Rhea" id="RHEA-COMP:10162"/>
        <dbReference type="Rhea" id="RHEA-COMP:10485"/>
        <dbReference type="ChEBI" id="CHEBI:17319"/>
        <dbReference type="ChEBI" id="CHEBI:33737"/>
        <dbReference type="ChEBI" id="CHEBI:33738"/>
        <dbReference type="ChEBI" id="CHEBI:57844"/>
        <dbReference type="ChEBI" id="CHEBI:57856"/>
        <dbReference type="ChEBI" id="CHEBI:59789"/>
        <dbReference type="ChEBI" id="CHEBI:74411"/>
        <dbReference type="ChEBI" id="CHEBI:74497"/>
        <dbReference type="EC" id="2.1.1.192"/>
    </reaction>
</comment>
<comment type="cofactor">
    <cofactor evidence="1">
        <name>[4Fe-4S] cluster</name>
        <dbReference type="ChEBI" id="CHEBI:49883"/>
    </cofactor>
    <text evidence="1">Binds 1 [4Fe-4S] cluster. The cluster is coordinated with 3 cysteines and an exchangeable S-adenosyl-L-methionine.</text>
</comment>
<comment type="subcellular location">
    <subcellularLocation>
        <location evidence="1">Cytoplasm</location>
    </subcellularLocation>
</comment>
<comment type="miscellaneous">
    <text evidence="1">Reaction proceeds by a ping-pong mechanism involving intermediate methylation of a conserved cysteine residue.</text>
</comment>
<comment type="similarity">
    <text evidence="1">Belongs to the radical SAM superfamily. RlmN family.</text>
</comment>
<comment type="sequence caution" evidence="3">
    <conflict type="erroneous initiation">
        <sequence resource="EMBL-CDS" id="CAF23419"/>
    </conflict>
</comment>
<proteinExistence type="inferred from homology"/>
<name>RLMN2_PARUW</name>
<evidence type="ECO:0000255" key="1">
    <source>
        <dbReference type="HAMAP-Rule" id="MF_01849"/>
    </source>
</evidence>
<evidence type="ECO:0000255" key="2">
    <source>
        <dbReference type="PROSITE-ProRule" id="PRU01266"/>
    </source>
</evidence>
<evidence type="ECO:0000305" key="3"/>
<feature type="chain" id="PRO_0000350327" description="Probable dual-specificity RNA methyltransferase RlmN 2">
    <location>
        <begin position="1"/>
        <end position="358"/>
    </location>
</feature>
<feature type="domain" description="Radical SAM core" evidence="2">
    <location>
        <begin position="96"/>
        <end position="328"/>
    </location>
</feature>
<feature type="active site" description="Proton acceptor" evidence="1">
    <location>
        <position position="90"/>
    </location>
</feature>
<feature type="active site" description="S-methylcysteine intermediate" evidence="1">
    <location>
        <position position="334"/>
    </location>
</feature>
<feature type="binding site" evidence="1">
    <location>
        <position position="110"/>
    </location>
    <ligand>
        <name>[4Fe-4S] cluster</name>
        <dbReference type="ChEBI" id="CHEBI:49883"/>
        <note>4Fe-4S-S-AdoMet</note>
    </ligand>
</feature>
<feature type="binding site" evidence="1">
    <location>
        <position position="114"/>
    </location>
    <ligand>
        <name>[4Fe-4S] cluster</name>
        <dbReference type="ChEBI" id="CHEBI:49883"/>
        <note>4Fe-4S-S-AdoMet</note>
    </ligand>
</feature>
<feature type="binding site" evidence="1">
    <location>
        <position position="117"/>
    </location>
    <ligand>
        <name>[4Fe-4S] cluster</name>
        <dbReference type="ChEBI" id="CHEBI:49883"/>
        <note>4Fe-4S-S-AdoMet</note>
    </ligand>
</feature>
<feature type="binding site" evidence="1">
    <location>
        <begin position="160"/>
        <end position="161"/>
    </location>
    <ligand>
        <name>S-adenosyl-L-methionine</name>
        <dbReference type="ChEBI" id="CHEBI:59789"/>
    </ligand>
</feature>
<feature type="binding site" evidence="1">
    <location>
        <position position="192"/>
    </location>
    <ligand>
        <name>S-adenosyl-L-methionine</name>
        <dbReference type="ChEBI" id="CHEBI:59789"/>
    </ligand>
</feature>
<feature type="binding site" evidence="1">
    <location>
        <begin position="215"/>
        <end position="217"/>
    </location>
    <ligand>
        <name>S-adenosyl-L-methionine</name>
        <dbReference type="ChEBI" id="CHEBI:59789"/>
    </ligand>
</feature>
<feature type="binding site" evidence="1">
    <location>
        <position position="291"/>
    </location>
    <ligand>
        <name>S-adenosyl-L-methionine</name>
        <dbReference type="ChEBI" id="CHEBI:59789"/>
    </ligand>
</feature>
<feature type="disulfide bond" description="(transient)" evidence="1">
    <location>
        <begin position="103"/>
        <end position="334"/>
    </location>
</feature>
<dbReference type="EC" id="2.1.1.192" evidence="1"/>
<dbReference type="EMBL" id="BX908798">
    <property type="protein sequence ID" value="CAF23419.1"/>
    <property type="status" value="ALT_INIT"/>
    <property type="molecule type" value="Genomic_DNA"/>
</dbReference>
<dbReference type="RefSeq" id="WP_044044863.1">
    <property type="nucleotide sequence ID" value="NC_005861.2"/>
</dbReference>
<dbReference type="SMR" id="Q6MDD0"/>
<dbReference type="STRING" id="264201.pc0695"/>
<dbReference type="eggNOG" id="COG0820">
    <property type="taxonomic scope" value="Bacteria"/>
</dbReference>
<dbReference type="HOGENOM" id="CLU_029101_2_0_0"/>
<dbReference type="OrthoDB" id="9793973at2"/>
<dbReference type="Proteomes" id="UP000000529">
    <property type="component" value="Chromosome"/>
</dbReference>
<dbReference type="GO" id="GO:0005737">
    <property type="term" value="C:cytoplasm"/>
    <property type="evidence" value="ECO:0007669"/>
    <property type="project" value="UniProtKB-SubCell"/>
</dbReference>
<dbReference type="GO" id="GO:0051539">
    <property type="term" value="F:4 iron, 4 sulfur cluster binding"/>
    <property type="evidence" value="ECO:0007669"/>
    <property type="project" value="UniProtKB-UniRule"/>
</dbReference>
<dbReference type="GO" id="GO:0046872">
    <property type="term" value="F:metal ion binding"/>
    <property type="evidence" value="ECO:0007669"/>
    <property type="project" value="UniProtKB-KW"/>
</dbReference>
<dbReference type="GO" id="GO:0070040">
    <property type="term" value="F:rRNA (adenine(2503)-C2-)-methyltransferase activity"/>
    <property type="evidence" value="ECO:0007669"/>
    <property type="project" value="UniProtKB-UniRule"/>
</dbReference>
<dbReference type="GO" id="GO:0019843">
    <property type="term" value="F:rRNA binding"/>
    <property type="evidence" value="ECO:0007669"/>
    <property type="project" value="UniProtKB-UniRule"/>
</dbReference>
<dbReference type="GO" id="GO:0002935">
    <property type="term" value="F:tRNA (adenine(37)-C2)-methyltransferase activity"/>
    <property type="evidence" value="ECO:0007669"/>
    <property type="project" value="UniProtKB-UniRule"/>
</dbReference>
<dbReference type="GO" id="GO:0000049">
    <property type="term" value="F:tRNA binding"/>
    <property type="evidence" value="ECO:0007669"/>
    <property type="project" value="UniProtKB-UniRule"/>
</dbReference>
<dbReference type="GO" id="GO:0070475">
    <property type="term" value="P:rRNA base methylation"/>
    <property type="evidence" value="ECO:0007669"/>
    <property type="project" value="UniProtKB-UniRule"/>
</dbReference>
<dbReference type="GO" id="GO:0030488">
    <property type="term" value="P:tRNA methylation"/>
    <property type="evidence" value="ECO:0007669"/>
    <property type="project" value="UniProtKB-UniRule"/>
</dbReference>
<dbReference type="CDD" id="cd01335">
    <property type="entry name" value="Radical_SAM"/>
    <property type="match status" value="1"/>
</dbReference>
<dbReference type="FunFam" id="3.20.20.70:FF:000014">
    <property type="entry name" value="Probable dual-specificity RNA methyltransferase RlmN"/>
    <property type="match status" value="1"/>
</dbReference>
<dbReference type="Gene3D" id="1.10.150.530">
    <property type="match status" value="1"/>
</dbReference>
<dbReference type="Gene3D" id="3.20.20.70">
    <property type="entry name" value="Aldolase class I"/>
    <property type="match status" value="1"/>
</dbReference>
<dbReference type="HAMAP" id="MF_01849">
    <property type="entry name" value="RNA_methyltr_RlmN"/>
    <property type="match status" value="1"/>
</dbReference>
<dbReference type="InterPro" id="IPR013785">
    <property type="entry name" value="Aldolase_TIM"/>
</dbReference>
<dbReference type="InterPro" id="IPR006638">
    <property type="entry name" value="Elp3/MiaA/NifB-like_rSAM"/>
</dbReference>
<dbReference type="InterPro" id="IPR040072">
    <property type="entry name" value="Methyltransferase_A"/>
</dbReference>
<dbReference type="InterPro" id="IPR048641">
    <property type="entry name" value="RlmN_N"/>
</dbReference>
<dbReference type="InterPro" id="IPR027492">
    <property type="entry name" value="RNA_MTrfase_RlmN"/>
</dbReference>
<dbReference type="InterPro" id="IPR004383">
    <property type="entry name" value="rRNA_lsu_MTrfase_RlmN/Cfr"/>
</dbReference>
<dbReference type="InterPro" id="IPR007197">
    <property type="entry name" value="rSAM"/>
</dbReference>
<dbReference type="NCBIfam" id="TIGR00048">
    <property type="entry name" value="rRNA_mod_RlmN"/>
    <property type="match status" value="1"/>
</dbReference>
<dbReference type="PANTHER" id="PTHR30544">
    <property type="entry name" value="23S RRNA METHYLTRANSFERASE"/>
    <property type="match status" value="1"/>
</dbReference>
<dbReference type="PANTHER" id="PTHR30544:SF5">
    <property type="entry name" value="RADICAL SAM CORE DOMAIN-CONTAINING PROTEIN"/>
    <property type="match status" value="1"/>
</dbReference>
<dbReference type="Pfam" id="PF04055">
    <property type="entry name" value="Radical_SAM"/>
    <property type="match status" value="1"/>
</dbReference>
<dbReference type="Pfam" id="PF21016">
    <property type="entry name" value="RlmN_N"/>
    <property type="match status" value="1"/>
</dbReference>
<dbReference type="PIRSF" id="PIRSF006004">
    <property type="entry name" value="CHP00048"/>
    <property type="match status" value="1"/>
</dbReference>
<dbReference type="SFLD" id="SFLDF00275">
    <property type="entry name" value="adenosine_C2_methyltransferase"/>
    <property type="match status" value="1"/>
</dbReference>
<dbReference type="SFLD" id="SFLDS00029">
    <property type="entry name" value="Radical_SAM"/>
    <property type="match status" value="1"/>
</dbReference>
<dbReference type="SMART" id="SM00729">
    <property type="entry name" value="Elp3"/>
    <property type="match status" value="1"/>
</dbReference>
<dbReference type="SUPFAM" id="SSF102114">
    <property type="entry name" value="Radical SAM enzymes"/>
    <property type="match status" value="1"/>
</dbReference>
<dbReference type="PROSITE" id="PS51918">
    <property type="entry name" value="RADICAL_SAM"/>
    <property type="match status" value="1"/>
</dbReference>
<accession>Q6MDD0</accession>
<reference key="1">
    <citation type="journal article" date="2004" name="Science">
        <title>Illuminating the evolutionary history of chlamydiae.</title>
        <authorList>
            <person name="Horn M."/>
            <person name="Collingro A."/>
            <person name="Schmitz-Esser S."/>
            <person name="Beier C.L."/>
            <person name="Purkhold U."/>
            <person name="Fartmann B."/>
            <person name="Brandt P."/>
            <person name="Nyakatura G.J."/>
            <person name="Droege M."/>
            <person name="Frishman D."/>
            <person name="Rattei T."/>
            <person name="Mewes H.-W."/>
            <person name="Wagner M."/>
        </authorList>
    </citation>
    <scope>NUCLEOTIDE SEQUENCE [LARGE SCALE GENOMIC DNA]</scope>
    <source>
        <strain>UWE25</strain>
    </source>
</reference>
<gene>
    <name evidence="1" type="primary">rlmN2</name>
    <name type="ordered locus">pc0695</name>
</gene>
<sequence>MDYADFDHQKLVEWLKAHGEKEFHAKQILSWIYQKGVLSWDKMSNLSQSLREKLAKHIRLPVLELVRYTESIDQETIKFLWRLRDGNLVESVLILSGIRRTVCVSSQVGCPAKCAFCASGQQGFFRNLRPTEIIEQILQINAWLSSKGEKVSHVVYMGMGEPLKNYESVVASIRVLSHPDFCNISQRRITVSTVGVVEGIKRLSKEGLKVNLVLSLHAPNQHIRKKIIPYARKYPLEEILESMDEYAQKTKRDITFEYTLLAGINDHPDHAHELAHLLKGKQCTVNLIPYNPIPGLRLKRPEKKAIKQFRSVLYGSHIVNTCRYTKGDDIGAACGQLALQEREGQTGLPMLKEVAFGS</sequence>